<name>KNS1_YEAST</name>
<organism>
    <name type="scientific">Saccharomyces cerevisiae (strain ATCC 204508 / S288c)</name>
    <name type="common">Baker's yeast</name>
    <dbReference type="NCBI Taxonomy" id="559292"/>
    <lineage>
        <taxon>Eukaryota</taxon>
        <taxon>Fungi</taxon>
        <taxon>Dikarya</taxon>
        <taxon>Ascomycota</taxon>
        <taxon>Saccharomycotina</taxon>
        <taxon>Saccharomycetes</taxon>
        <taxon>Saccharomycetales</taxon>
        <taxon>Saccharomycetaceae</taxon>
        <taxon>Saccharomyces</taxon>
    </lineage>
</organism>
<feature type="chain" id="PRO_0000086155" description="Dual specificity protein kinase KNS1">
    <location>
        <begin position="1"/>
        <end position="737"/>
    </location>
</feature>
<feature type="domain" description="Protein kinase" evidence="1">
    <location>
        <begin position="313"/>
        <end position="720"/>
    </location>
</feature>
<feature type="region of interest" description="Disordered" evidence="3">
    <location>
        <begin position="1"/>
        <end position="33"/>
    </location>
</feature>
<feature type="region of interest" description="Disordered" evidence="3">
    <location>
        <begin position="270"/>
        <end position="290"/>
    </location>
</feature>
<feature type="compositionally biased region" description="Polar residues" evidence="3">
    <location>
        <begin position="15"/>
        <end position="33"/>
    </location>
</feature>
<feature type="compositionally biased region" description="Low complexity" evidence="3">
    <location>
        <begin position="277"/>
        <end position="290"/>
    </location>
</feature>
<feature type="active site" description="Proton acceptor" evidence="1 2">
    <location>
        <position position="440"/>
    </location>
</feature>
<feature type="binding site" evidence="1">
    <location>
        <begin position="319"/>
        <end position="327"/>
    </location>
    <ligand>
        <name>ATP</name>
        <dbReference type="ChEBI" id="CHEBI:30616"/>
    </ligand>
</feature>
<feature type="binding site" evidence="1">
    <location>
        <position position="343"/>
    </location>
    <ligand>
        <name>ATP</name>
        <dbReference type="ChEBI" id="CHEBI:30616"/>
    </ligand>
</feature>
<feature type="modified residue" description="Phosphothreonine" evidence="6">
    <location>
        <position position="562"/>
    </location>
</feature>
<feature type="sequence conflict" description="In Ref. 1; AAA34724." evidence="5" ref="1">
    <original>RFPGSHIQAIA</original>
    <variation>GSPALISGHC</variation>
    <location>
        <begin position="411"/>
        <end position="421"/>
    </location>
</feature>
<proteinExistence type="evidence at protein level"/>
<reference key="1">
    <citation type="journal article" date="1991" name="Mol. Gen. Genet.">
        <title>The KNS1 gene of Saccharomyces cerevisiae encodes a nonessential protein kinase homologue that is distantly related to members of the CDC28/cdc2 gene family.</title>
        <authorList>
            <person name="Padmanabha R."/>
            <person name="Gehrung S."/>
            <person name="Snyder M."/>
        </authorList>
    </citation>
    <scope>NUCLEOTIDE SEQUENCE [GENOMIC DNA]</scope>
    <source>
        <strain>ATCC 204508 / S288c</strain>
    </source>
</reference>
<reference key="2">
    <citation type="journal article" date="1997" name="Yeast">
        <title>The sequence of 32kb on the left arm of yeast chromosome XII reveals six known genes, a new member of the seripauperins family and a new ABC transporter homologous to the human multidrug resistance protein.</title>
        <authorList>
            <person name="Purnelle B."/>
            <person name="Goffeau A."/>
        </authorList>
    </citation>
    <scope>NUCLEOTIDE SEQUENCE [GENOMIC DNA]</scope>
    <source>
        <strain>ATCC 204508 / S288c</strain>
    </source>
</reference>
<reference key="3">
    <citation type="journal article" date="1997" name="Nature">
        <title>The nucleotide sequence of Saccharomyces cerevisiae chromosome XII.</title>
        <authorList>
            <person name="Johnston M."/>
            <person name="Hillier L.W."/>
            <person name="Riles L."/>
            <person name="Albermann K."/>
            <person name="Andre B."/>
            <person name="Ansorge W."/>
            <person name="Benes V."/>
            <person name="Brueckner M."/>
            <person name="Delius H."/>
            <person name="Dubois E."/>
            <person name="Duesterhoeft A."/>
            <person name="Entian K.-D."/>
            <person name="Floeth M."/>
            <person name="Goffeau A."/>
            <person name="Hebling U."/>
            <person name="Heumann K."/>
            <person name="Heuss-Neitzel D."/>
            <person name="Hilbert H."/>
            <person name="Hilger F."/>
            <person name="Kleine K."/>
            <person name="Koetter P."/>
            <person name="Louis E.J."/>
            <person name="Messenguy F."/>
            <person name="Mewes H.-W."/>
            <person name="Miosga T."/>
            <person name="Moestl D."/>
            <person name="Mueller-Auer S."/>
            <person name="Nentwich U."/>
            <person name="Obermaier B."/>
            <person name="Piravandi E."/>
            <person name="Pohl T.M."/>
            <person name="Portetelle D."/>
            <person name="Purnelle B."/>
            <person name="Rechmann S."/>
            <person name="Rieger M."/>
            <person name="Rinke M."/>
            <person name="Rose M."/>
            <person name="Scharfe M."/>
            <person name="Scherens B."/>
            <person name="Scholler P."/>
            <person name="Schwager C."/>
            <person name="Schwarz S."/>
            <person name="Underwood A.P."/>
            <person name="Urrestarazu L.A."/>
            <person name="Vandenbol M."/>
            <person name="Verhasselt P."/>
            <person name="Vierendeels F."/>
            <person name="Voet M."/>
            <person name="Volckaert G."/>
            <person name="Voss H."/>
            <person name="Wambutt R."/>
            <person name="Wedler E."/>
            <person name="Wedler H."/>
            <person name="Zimmermann F.K."/>
            <person name="Zollner A."/>
            <person name="Hani J."/>
            <person name="Hoheisel J.D."/>
        </authorList>
    </citation>
    <scope>NUCLEOTIDE SEQUENCE [LARGE SCALE GENOMIC DNA]</scope>
    <source>
        <strain>ATCC 204508 / S288c</strain>
    </source>
</reference>
<reference key="4">
    <citation type="journal article" date="2014" name="G3 (Bethesda)">
        <title>The reference genome sequence of Saccharomyces cerevisiae: Then and now.</title>
        <authorList>
            <person name="Engel S.R."/>
            <person name="Dietrich F.S."/>
            <person name="Fisk D.G."/>
            <person name="Binkley G."/>
            <person name="Balakrishnan R."/>
            <person name="Costanzo M.C."/>
            <person name="Dwight S.S."/>
            <person name="Hitz B.C."/>
            <person name="Karra K."/>
            <person name="Nash R.S."/>
            <person name="Weng S."/>
            <person name="Wong E.D."/>
            <person name="Lloyd P."/>
            <person name="Skrzypek M.S."/>
            <person name="Miyasato S.R."/>
            <person name="Simison M."/>
            <person name="Cherry J.M."/>
        </authorList>
    </citation>
    <scope>GENOME REANNOTATION</scope>
    <source>
        <strain>ATCC 204508 / S288c</strain>
    </source>
</reference>
<reference key="5">
    <citation type="journal article" date="1996" name="J. Biol. Chem.">
        <title>Activity and autophosphorylation of LAMMER protein kinases.</title>
        <authorList>
            <person name="Lee K."/>
            <person name="Du C."/>
            <person name="Horn M."/>
            <person name="Rabinow L."/>
        </authorList>
    </citation>
    <scope>FUNCTION</scope>
</reference>
<reference key="6">
    <citation type="journal article" date="2001" name="Biochem. Biophys. Res. Commun.">
        <title>Negative regulation of filamentous growth and flocculation by Lkh1, a fission yeast LAMMER kinase homolog.</title>
        <authorList>
            <person name="Kim K.-H."/>
            <person name="Cho Y.-M."/>
            <person name="Kang W.-H."/>
            <person name="Kim J.-H."/>
            <person name="Byun K.-H."/>
            <person name="Park Y.-D."/>
            <person name="Bae K.-S."/>
            <person name="Park H.-M."/>
        </authorList>
    </citation>
    <scope>AUTOPHOSPHORYLATION</scope>
</reference>
<reference key="7">
    <citation type="journal article" date="2008" name="Mol. Cell. Proteomics">
        <title>A multidimensional chromatography technology for in-depth phosphoproteome analysis.</title>
        <authorList>
            <person name="Albuquerque C.P."/>
            <person name="Smolka M.B."/>
            <person name="Payne S.H."/>
            <person name="Bafna V."/>
            <person name="Eng J."/>
            <person name="Zhou H."/>
        </authorList>
    </citation>
    <scope>PHOSPHORYLATION [LARGE SCALE ANALYSIS] AT THR-562</scope>
    <scope>IDENTIFICATION BY MASS SPECTROMETRY [LARGE SCALE ANALYSIS]</scope>
</reference>
<reference key="8">
    <citation type="journal article" date="2009" name="Science">
        <title>Global analysis of Cdk1 substrate phosphorylation sites provides insights into evolution.</title>
        <authorList>
            <person name="Holt L.J."/>
            <person name="Tuch B.B."/>
            <person name="Villen J."/>
            <person name="Johnson A.D."/>
            <person name="Gygi S.P."/>
            <person name="Morgan D.O."/>
        </authorList>
    </citation>
    <scope>IDENTIFICATION BY MASS SPECTROMETRY [LARGE SCALE ANALYSIS]</scope>
</reference>
<sequence>MSQNIQIGTRKRSRANMNNSTTTGPANNTSSNKTFLDNFEETRTNKLLDEMFARQNSFLTDNLRNSLDLNQADNPLRPRQHQHQLFLDNENAIELDEEPRIINTTINNSNNHNSSRVDEDADDDIIFIKEQPIQFSSPLILPSSSSINNNNNIVTSNNPGCGTAATSNSTYITTPKKFKKQRTISLPQLPLSKLSYQSNYFNVPDQTNAIVPRVTQTENELLHLTGSCAKTLEGNKAVNLTIAHSTSPFSNPPAQIASLPQSNLKKQIGSSLRKFTSNGSSESASSNKSNFKTDKDGHYVYQENDIFGSGGRFVVKDLLGQGTFGKVLKCIDNKYEPNYVAVKVIRAVDRYREAAKTELRILQTILNNDPQGQFQCLLLRECFDYKNHICLVTDLYGRSIYDFMCSNGIARFPGSHIQAIARQLIRSVCFLHDLGIIHTDLKPENILICDETHIAQKLPLKTVQSLSKRRREASKGKRKILKNPEIKIIDFGSAIFHYEYHPPVISTRHYRAPEIVLGLGWSFPCDIWSIACVLVELVIGESLYPIHENLEHMAMMQRINGTPFPTDIIDKMFYKSKHKLGNSPSDLNSTVIKHFDRKTLSLQWPEKNKRGDTITTEKSMKRVLQSCDRLDIYISKVLKQDYGDSLSINWNLPPEKNWSLINSKLAWKRQTHSSSSSTTDELDKETFLFWYWFIDLLRKMFEFDPTKRITAKDALDHEWFNLGILDDGIATYNNTQG</sequence>
<dbReference type="EC" id="2.7.12.1"/>
<dbReference type="EMBL" id="M85200">
    <property type="protein sequence ID" value="AAA34724.1"/>
    <property type="molecule type" value="Genomic_DNA"/>
</dbReference>
<dbReference type="EMBL" id="Z73125">
    <property type="protein sequence ID" value="CAA97468.1"/>
    <property type="molecule type" value="Genomic_DNA"/>
</dbReference>
<dbReference type="EMBL" id="X97560">
    <property type="protein sequence ID" value="CAA66171.1"/>
    <property type="molecule type" value="Genomic_DNA"/>
</dbReference>
<dbReference type="EMBL" id="Z73123">
    <property type="protein sequence ID" value="CAA97465.1"/>
    <property type="molecule type" value="Genomic_DNA"/>
</dbReference>
<dbReference type="EMBL" id="BK006945">
    <property type="protein sequence ID" value="DAA09300.1"/>
    <property type="molecule type" value="Genomic_DNA"/>
</dbReference>
<dbReference type="PIR" id="S64767">
    <property type="entry name" value="S64767"/>
</dbReference>
<dbReference type="RefSeq" id="NP_013081.1">
    <property type="nucleotide sequence ID" value="NM_001181839.1"/>
</dbReference>
<dbReference type="SMR" id="P32350"/>
<dbReference type="BioGRID" id="31233">
    <property type="interactions" value="247"/>
</dbReference>
<dbReference type="DIP" id="DIP-1900N"/>
<dbReference type="FunCoup" id="P32350">
    <property type="interactions" value="949"/>
</dbReference>
<dbReference type="IntAct" id="P32350">
    <property type="interactions" value="39"/>
</dbReference>
<dbReference type="MINT" id="P32350"/>
<dbReference type="STRING" id="4932.YLL019C"/>
<dbReference type="iPTMnet" id="P32350"/>
<dbReference type="PaxDb" id="4932-YLL019C"/>
<dbReference type="PeptideAtlas" id="P32350"/>
<dbReference type="TopDownProteomics" id="P32350"/>
<dbReference type="EnsemblFungi" id="YLL019C_mRNA">
    <property type="protein sequence ID" value="YLL019C"/>
    <property type="gene ID" value="YLL019C"/>
</dbReference>
<dbReference type="GeneID" id="850641"/>
<dbReference type="KEGG" id="sce:YLL019C"/>
<dbReference type="AGR" id="SGD:S000003942"/>
<dbReference type="SGD" id="S000003942">
    <property type="gene designation" value="KNS1"/>
</dbReference>
<dbReference type="VEuPathDB" id="FungiDB:YLL019C"/>
<dbReference type="eggNOG" id="KOG0671">
    <property type="taxonomic scope" value="Eukaryota"/>
</dbReference>
<dbReference type="GeneTree" id="ENSGT00960000189195"/>
<dbReference type="HOGENOM" id="CLU_000288_5_8_1"/>
<dbReference type="InParanoid" id="P32350"/>
<dbReference type="OMA" id="YKNHICL"/>
<dbReference type="OrthoDB" id="283111at2759"/>
<dbReference type="BioCyc" id="YEAST:G3O-32124-MONOMER"/>
<dbReference type="BRENDA" id="2.7.12.1">
    <property type="organism ID" value="984"/>
</dbReference>
<dbReference type="BioGRID-ORCS" id="850641">
    <property type="hits" value="0 hits in 13 CRISPR screens"/>
</dbReference>
<dbReference type="PRO" id="PR:P32350"/>
<dbReference type="Proteomes" id="UP000002311">
    <property type="component" value="Chromosome XII"/>
</dbReference>
<dbReference type="RNAct" id="P32350">
    <property type="molecule type" value="protein"/>
</dbReference>
<dbReference type="GO" id="GO:0005737">
    <property type="term" value="C:cytoplasm"/>
    <property type="evidence" value="ECO:0000314"/>
    <property type="project" value="SGD"/>
</dbReference>
<dbReference type="GO" id="GO:0005634">
    <property type="term" value="C:nucleus"/>
    <property type="evidence" value="ECO:0000314"/>
    <property type="project" value="SGD"/>
</dbReference>
<dbReference type="GO" id="GO:0005524">
    <property type="term" value="F:ATP binding"/>
    <property type="evidence" value="ECO:0007669"/>
    <property type="project" value="UniProtKB-KW"/>
</dbReference>
<dbReference type="GO" id="GO:0004672">
    <property type="term" value="F:protein kinase activity"/>
    <property type="evidence" value="ECO:0007005"/>
    <property type="project" value="SGD"/>
</dbReference>
<dbReference type="GO" id="GO:0106310">
    <property type="term" value="F:protein serine kinase activity"/>
    <property type="evidence" value="ECO:0007669"/>
    <property type="project" value="RHEA"/>
</dbReference>
<dbReference type="GO" id="GO:0004674">
    <property type="term" value="F:protein serine/threonine kinase activity"/>
    <property type="evidence" value="ECO:0000314"/>
    <property type="project" value="SGD"/>
</dbReference>
<dbReference type="GO" id="GO:0004712">
    <property type="term" value="F:protein serine/threonine/tyrosine kinase activity"/>
    <property type="evidence" value="ECO:0007669"/>
    <property type="project" value="UniProtKB-EC"/>
</dbReference>
<dbReference type="GO" id="GO:0004713">
    <property type="term" value="F:protein tyrosine kinase activity"/>
    <property type="evidence" value="ECO:0000314"/>
    <property type="project" value="SGD"/>
</dbReference>
<dbReference type="GO" id="GO:0016480">
    <property type="term" value="P:negative regulation of transcription by RNA polymerase III"/>
    <property type="evidence" value="ECO:0000314"/>
    <property type="project" value="SGD"/>
</dbReference>
<dbReference type="GO" id="GO:0043484">
    <property type="term" value="P:regulation of RNA splicing"/>
    <property type="evidence" value="ECO:0000318"/>
    <property type="project" value="GO_Central"/>
</dbReference>
<dbReference type="CDD" id="cd14134">
    <property type="entry name" value="PKc_CLK"/>
    <property type="match status" value="1"/>
</dbReference>
<dbReference type="FunFam" id="1.10.510.10:FF:001145">
    <property type="entry name" value="Protein kinase KNS1"/>
    <property type="match status" value="1"/>
</dbReference>
<dbReference type="Gene3D" id="3.30.200.20">
    <property type="entry name" value="Phosphorylase Kinase, domain 1"/>
    <property type="match status" value="1"/>
</dbReference>
<dbReference type="Gene3D" id="1.10.510.10">
    <property type="entry name" value="Transferase(Phosphotransferase) domain 1"/>
    <property type="match status" value="2"/>
</dbReference>
<dbReference type="InterPro" id="IPR051175">
    <property type="entry name" value="CLK_kinases"/>
</dbReference>
<dbReference type="InterPro" id="IPR011009">
    <property type="entry name" value="Kinase-like_dom_sf"/>
</dbReference>
<dbReference type="InterPro" id="IPR000719">
    <property type="entry name" value="Prot_kinase_dom"/>
</dbReference>
<dbReference type="InterPro" id="IPR017441">
    <property type="entry name" value="Protein_kinase_ATP_BS"/>
</dbReference>
<dbReference type="InterPro" id="IPR008271">
    <property type="entry name" value="Ser/Thr_kinase_AS"/>
</dbReference>
<dbReference type="PANTHER" id="PTHR45646">
    <property type="entry name" value="SERINE/THREONINE-PROTEIN KINASE DOA-RELATED"/>
    <property type="match status" value="1"/>
</dbReference>
<dbReference type="PANTHER" id="PTHR45646:SF11">
    <property type="entry name" value="SERINE_THREONINE-PROTEIN KINASE DOA"/>
    <property type="match status" value="1"/>
</dbReference>
<dbReference type="Pfam" id="PF00069">
    <property type="entry name" value="Pkinase"/>
    <property type="match status" value="1"/>
</dbReference>
<dbReference type="SMART" id="SM00220">
    <property type="entry name" value="S_TKc"/>
    <property type="match status" value="1"/>
</dbReference>
<dbReference type="SUPFAM" id="SSF56112">
    <property type="entry name" value="Protein kinase-like (PK-like)"/>
    <property type="match status" value="1"/>
</dbReference>
<dbReference type="PROSITE" id="PS00107">
    <property type="entry name" value="PROTEIN_KINASE_ATP"/>
    <property type="match status" value="1"/>
</dbReference>
<dbReference type="PROSITE" id="PS50011">
    <property type="entry name" value="PROTEIN_KINASE_DOM"/>
    <property type="match status" value="1"/>
</dbReference>
<dbReference type="PROSITE" id="PS00108">
    <property type="entry name" value="PROTEIN_KINASE_ST"/>
    <property type="match status" value="1"/>
</dbReference>
<evidence type="ECO:0000255" key="1">
    <source>
        <dbReference type="PROSITE-ProRule" id="PRU00159"/>
    </source>
</evidence>
<evidence type="ECO:0000255" key="2">
    <source>
        <dbReference type="PROSITE-ProRule" id="PRU10027"/>
    </source>
</evidence>
<evidence type="ECO:0000256" key="3">
    <source>
        <dbReference type="SAM" id="MobiDB-lite"/>
    </source>
</evidence>
<evidence type="ECO:0000269" key="4">
    <source>
    </source>
</evidence>
<evidence type="ECO:0000305" key="5"/>
<evidence type="ECO:0007744" key="6">
    <source>
    </source>
</evidence>
<gene>
    <name type="primary">KNS1</name>
    <name type="ordered locus">YLL019C</name>
</gene>
<protein>
    <recommendedName>
        <fullName>Dual specificity protein kinase KNS1</fullName>
        <ecNumber>2.7.12.1</ecNumber>
    </recommendedName>
</protein>
<keyword id="KW-0067">ATP-binding</keyword>
<keyword id="KW-0418">Kinase</keyword>
<keyword id="KW-0547">Nucleotide-binding</keyword>
<keyword id="KW-0597">Phosphoprotein</keyword>
<keyword id="KW-1185">Reference proteome</keyword>
<keyword id="KW-0723">Serine/threonine-protein kinase</keyword>
<keyword id="KW-0808">Transferase</keyword>
<keyword id="KW-0829">Tyrosine-protein kinase</keyword>
<accession>P32350</accession>
<accession>D6VXY4</accession>
<accession>Q12399</accession>
<comment type="function">
    <text evidence="4">Nonessential protein kinase.</text>
</comment>
<comment type="catalytic activity">
    <reaction>
        <text>L-seryl-[protein] + ATP = O-phospho-L-seryl-[protein] + ADP + H(+)</text>
        <dbReference type="Rhea" id="RHEA:17989"/>
        <dbReference type="Rhea" id="RHEA-COMP:9863"/>
        <dbReference type="Rhea" id="RHEA-COMP:11604"/>
        <dbReference type="ChEBI" id="CHEBI:15378"/>
        <dbReference type="ChEBI" id="CHEBI:29999"/>
        <dbReference type="ChEBI" id="CHEBI:30616"/>
        <dbReference type="ChEBI" id="CHEBI:83421"/>
        <dbReference type="ChEBI" id="CHEBI:456216"/>
        <dbReference type="EC" id="2.7.12.1"/>
    </reaction>
</comment>
<comment type="catalytic activity">
    <reaction>
        <text>L-threonyl-[protein] + ATP = O-phospho-L-threonyl-[protein] + ADP + H(+)</text>
        <dbReference type="Rhea" id="RHEA:46608"/>
        <dbReference type="Rhea" id="RHEA-COMP:11060"/>
        <dbReference type="Rhea" id="RHEA-COMP:11605"/>
        <dbReference type="ChEBI" id="CHEBI:15378"/>
        <dbReference type="ChEBI" id="CHEBI:30013"/>
        <dbReference type="ChEBI" id="CHEBI:30616"/>
        <dbReference type="ChEBI" id="CHEBI:61977"/>
        <dbReference type="ChEBI" id="CHEBI:456216"/>
        <dbReference type="EC" id="2.7.12.1"/>
    </reaction>
</comment>
<comment type="catalytic activity">
    <reaction>
        <text>L-tyrosyl-[protein] + ATP = O-phospho-L-tyrosyl-[protein] + ADP + H(+)</text>
        <dbReference type="Rhea" id="RHEA:10596"/>
        <dbReference type="Rhea" id="RHEA-COMP:10136"/>
        <dbReference type="Rhea" id="RHEA-COMP:20101"/>
        <dbReference type="ChEBI" id="CHEBI:15378"/>
        <dbReference type="ChEBI" id="CHEBI:30616"/>
        <dbReference type="ChEBI" id="CHEBI:46858"/>
        <dbReference type="ChEBI" id="CHEBI:61978"/>
        <dbReference type="ChEBI" id="CHEBI:456216"/>
        <dbReference type="EC" id="2.7.12.1"/>
    </reaction>
</comment>
<comment type="PTM">
    <text>Phosphorylated (auto-) on Ser/Thr/Tyr.</text>
</comment>
<comment type="similarity">
    <text evidence="5">Belongs to the protein kinase superfamily. CMGC Ser/Thr protein kinase family. Lammer subfamily.</text>
</comment>